<proteinExistence type="inferred from homology"/>
<gene>
    <name evidence="1" type="primary">rimP</name>
    <name type="ordered locus">BRADO0050</name>
</gene>
<sequence length="233" mass="25443">MEPGVAARVAAVADPVLQGMGYRLVRIRISGESGCTVQVMAERPDGTMQIEDCEAVSRALSPVLDIADPIDRAYRLEISSPGIDRPLVRRSDFERHVGHLVKIEMAVAYQNRKRFRGIIKGVEGDGVRITRDDVAKDADPDVVLPMADIGDAKMVLTDELIAESMRRGKAAEREKKRDLGLAPPLAPHAKPAAQAKPKPKAKDGKPAKKPLPTDTKKHRLAADRARRGEIDPD</sequence>
<keyword id="KW-0963">Cytoplasm</keyword>
<keyword id="KW-1185">Reference proteome</keyword>
<keyword id="KW-0690">Ribosome biogenesis</keyword>
<dbReference type="EMBL" id="CU234118">
    <property type="protein sequence ID" value="CAL74022.1"/>
    <property type="molecule type" value="Genomic_DNA"/>
</dbReference>
<dbReference type="SMR" id="A4YJE6"/>
<dbReference type="STRING" id="114615.BRADO0050"/>
<dbReference type="KEGG" id="bra:BRADO0050"/>
<dbReference type="eggNOG" id="COG0779">
    <property type="taxonomic scope" value="Bacteria"/>
</dbReference>
<dbReference type="HOGENOM" id="CLU_070525_0_0_5"/>
<dbReference type="Proteomes" id="UP000001994">
    <property type="component" value="Chromosome"/>
</dbReference>
<dbReference type="GO" id="GO:0005829">
    <property type="term" value="C:cytosol"/>
    <property type="evidence" value="ECO:0007669"/>
    <property type="project" value="TreeGrafter"/>
</dbReference>
<dbReference type="GO" id="GO:0000028">
    <property type="term" value="P:ribosomal small subunit assembly"/>
    <property type="evidence" value="ECO:0007669"/>
    <property type="project" value="TreeGrafter"/>
</dbReference>
<dbReference type="GO" id="GO:0006412">
    <property type="term" value="P:translation"/>
    <property type="evidence" value="ECO:0007669"/>
    <property type="project" value="TreeGrafter"/>
</dbReference>
<dbReference type="CDD" id="cd01734">
    <property type="entry name" value="YlxS_C"/>
    <property type="match status" value="1"/>
</dbReference>
<dbReference type="Gene3D" id="2.30.30.180">
    <property type="entry name" value="Ribosome maturation factor RimP, C-terminal domain"/>
    <property type="match status" value="1"/>
</dbReference>
<dbReference type="Gene3D" id="3.30.300.70">
    <property type="entry name" value="RimP-like superfamily, N-terminal"/>
    <property type="match status" value="1"/>
</dbReference>
<dbReference type="HAMAP" id="MF_01077">
    <property type="entry name" value="RimP"/>
    <property type="match status" value="1"/>
</dbReference>
<dbReference type="InterPro" id="IPR003728">
    <property type="entry name" value="Ribosome_maturation_RimP"/>
</dbReference>
<dbReference type="InterPro" id="IPR028998">
    <property type="entry name" value="RimP_C"/>
</dbReference>
<dbReference type="InterPro" id="IPR036847">
    <property type="entry name" value="RimP_C_sf"/>
</dbReference>
<dbReference type="InterPro" id="IPR028989">
    <property type="entry name" value="RimP_N"/>
</dbReference>
<dbReference type="InterPro" id="IPR035956">
    <property type="entry name" value="RimP_N_sf"/>
</dbReference>
<dbReference type="NCBIfam" id="NF000932">
    <property type="entry name" value="PRK00092.2-5"/>
    <property type="match status" value="1"/>
</dbReference>
<dbReference type="NCBIfam" id="NF000933">
    <property type="entry name" value="PRK00092.2-6"/>
    <property type="match status" value="1"/>
</dbReference>
<dbReference type="PANTHER" id="PTHR33867">
    <property type="entry name" value="RIBOSOME MATURATION FACTOR RIMP"/>
    <property type="match status" value="1"/>
</dbReference>
<dbReference type="PANTHER" id="PTHR33867:SF1">
    <property type="entry name" value="RIBOSOME MATURATION FACTOR RIMP"/>
    <property type="match status" value="1"/>
</dbReference>
<dbReference type="Pfam" id="PF17384">
    <property type="entry name" value="DUF150_C"/>
    <property type="match status" value="1"/>
</dbReference>
<dbReference type="Pfam" id="PF02576">
    <property type="entry name" value="RimP_N"/>
    <property type="match status" value="1"/>
</dbReference>
<dbReference type="SUPFAM" id="SSF74942">
    <property type="entry name" value="YhbC-like, C-terminal domain"/>
    <property type="match status" value="1"/>
</dbReference>
<dbReference type="SUPFAM" id="SSF75420">
    <property type="entry name" value="YhbC-like, N-terminal domain"/>
    <property type="match status" value="1"/>
</dbReference>
<reference key="1">
    <citation type="journal article" date="2007" name="Science">
        <title>Legumes symbioses: absence of nod genes in photosynthetic bradyrhizobia.</title>
        <authorList>
            <person name="Giraud E."/>
            <person name="Moulin L."/>
            <person name="Vallenet D."/>
            <person name="Barbe V."/>
            <person name="Cytryn E."/>
            <person name="Avarre J.-C."/>
            <person name="Jaubert M."/>
            <person name="Simon D."/>
            <person name="Cartieaux F."/>
            <person name="Prin Y."/>
            <person name="Bena G."/>
            <person name="Hannibal L."/>
            <person name="Fardoux J."/>
            <person name="Kojadinovic M."/>
            <person name="Vuillet L."/>
            <person name="Lajus A."/>
            <person name="Cruveiller S."/>
            <person name="Rouy Z."/>
            <person name="Mangenot S."/>
            <person name="Segurens B."/>
            <person name="Dossat C."/>
            <person name="Franck W.L."/>
            <person name="Chang W.-S."/>
            <person name="Saunders E."/>
            <person name="Bruce D."/>
            <person name="Richardson P."/>
            <person name="Normand P."/>
            <person name="Dreyfus B."/>
            <person name="Pignol D."/>
            <person name="Stacey G."/>
            <person name="Emerich D."/>
            <person name="Vermeglio A."/>
            <person name="Medigue C."/>
            <person name="Sadowsky M."/>
        </authorList>
    </citation>
    <scope>NUCLEOTIDE SEQUENCE [LARGE SCALE GENOMIC DNA]</scope>
    <source>
        <strain>ORS 278</strain>
    </source>
</reference>
<protein>
    <recommendedName>
        <fullName evidence="1">Ribosome maturation factor RimP</fullName>
    </recommendedName>
</protein>
<name>RIMP_BRASO</name>
<comment type="function">
    <text evidence="1">Required for maturation of 30S ribosomal subunits.</text>
</comment>
<comment type="subcellular location">
    <subcellularLocation>
        <location evidence="1">Cytoplasm</location>
    </subcellularLocation>
</comment>
<comment type="similarity">
    <text evidence="1">Belongs to the RimP family.</text>
</comment>
<feature type="chain" id="PRO_0000384616" description="Ribosome maturation factor RimP">
    <location>
        <begin position="1"/>
        <end position="233"/>
    </location>
</feature>
<feature type="region of interest" description="Disordered" evidence="2">
    <location>
        <begin position="167"/>
        <end position="233"/>
    </location>
</feature>
<feature type="compositionally biased region" description="Basic and acidic residues" evidence="2">
    <location>
        <begin position="167"/>
        <end position="179"/>
    </location>
</feature>
<feature type="compositionally biased region" description="Low complexity" evidence="2">
    <location>
        <begin position="187"/>
        <end position="196"/>
    </location>
</feature>
<feature type="compositionally biased region" description="Basic and acidic residues" evidence="2">
    <location>
        <begin position="220"/>
        <end position="233"/>
    </location>
</feature>
<evidence type="ECO:0000255" key="1">
    <source>
        <dbReference type="HAMAP-Rule" id="MF_01077"/>
    </source>
</evidence>
<evidence type="ECO:0000256" key="2">
    <source>
        <dbReference type="SAM" id="MobiDB-lite"/>
    </source>
</evidence>
<accession>A4YJE6</accession>
<organism>
    <name type="scientific">Bradyrhizobium sp. (strain ORS 278)</name>
    <dbReference type="NCBI Taxonomy" id="114615"/>
    <lineage>
        <taxon>Bacteria</taxon>
        <taxon>Pseudomonadati</taxon>
        <taxon>Pseudomonadota</taxon>
        <taxon>Alphaproteobacteria</taxon>
        <taxon>Hyphomicrobiales</taxon>
        <taxon>Nitrobacteraceae</taxon>
        <taxon>Bradyrhizobium</taxon>
    </lineage>
</organism>